<organism>
    <name type="scientific">Cellvibrio japonicus (strain Ueda107)</name>
    <name type="common">Pseudomonas fluorescens subsp. cellulosa</name>
    <dbReference type="NCBI Taxonomy" id="498211"/>
    <lineage>
        <taxon>Bacteria</taxon>
        <taxon>Pseudomonadati</taxon>
        <taxon>Pseudomonadota</taxon>
        <taxon>Gammaproteobacteria</taxon>
        <taxon>Cellvibrionales</taxon>
        <taxon>Cellvibrionaceae</taxon>
        <taxon>Cellvibrio</taxon>
    </lineage>
</organism>
<dbReference type="EC" id="2.5.1.6" evidence="1"/>
<dbReference type="EMBL" id="CP000934">
    <property type="protein sequence ID" value="ACE82640.1"/>
    <property type="molecule type" value="Genomic_DNA"/>
</dbReference>
<dbReference type="RefSeq" id="WP_012485890.1">
    <property type="nucleotide sequence ID" value="NC_010995.1"/>
</dbReference>
<dbReference type="SMR" id="B3PGF2"/>
<dbReference type="STRING" id="498211.CJA_0207"/>
<dbReference type="KEGG" id="cja:CJA_0207"/>
<dbReference type="eggNOG" id="COG0192">
    <property type="taxonomic scope" value="Bacteria"/>
</dbReference>
<dbReference type="HOGENOM" id="CLU_041802_1_1_6"/>
<dbReference type="OrthoDB" id="9801686at2"/>
<dbReference type="UniPathway" id="UPA00315">
    <property type="reaction ID" value="UER00080"/>
</dbReference>
<dbReference type="Proteomes" id="UP000001036">
    <property type="component" value="Chromosome"/>
</dbReference>
<dbReference type="GO" id="GO:0005737">
    <property type="term" value="C:cytoplasm"/>
    <property type="evidence" value="ECO:0007669"/>
    <property type="project" value="UniProtKB-SubCell"/>
</dbReference>
<dbReference type="GO" id="GO:0005524">
    <property type="term" value="F:ATP binding"/>
    <property type="evidence" value="ECO:0007669"/>
    <property type="project" value="UniProtKB-UniRule"/>
</dbReference>
<dbReference type="GO" id="GO:0000287">
    <property type="term" value="F:magnesium ion binding"/>
    <property type="evidence" value="ECO:0007669"/>
    <property type="project" value="UniProtKB-UniRule"/>
</dbReference>
<dbReference type="GO" id="GO:0004478">
    <property type="term" value="F:methionine adenosyltransferase activity"/>
    <property type="evidence" value="ECO:0007669"/>
    <property type="project" value="UniProtKB-UniRule"/>
</dbReference>
<dbReference type="GO" id="GO:0006730">
    <property type="term" value="P:one-carbon metabolic process"/>
    <property type="evidence" value="ECO:0007669"/>
    <property type="project" value="UniProtKB-KW"/>
</dbReference>
<dbReference type="GO" id="GO:0006556">
    <property type="term" value="P:S-adenosylmethionine biosynthetic process"/>
    <property type="evidence" value="ECO:0007669"/>
    <property type="project" value="UniProtKB-UniRule"/>
</dbReference>
<dbReference type="CDD" id="cd18079">
    <property type="entry name" value="S-AdoMet_synt"/>
    <property type="match status" value="1"/>
</dbReference>
<dbReference type="FunFam" id="3.30.300.10:FF:000003">
    <property type="entry name" value="S-adenosylmethionine synthase"/>
    <property type="match status" value="1"/>
</dbReference>
<dbReference type="FunFam" id="3.30.300.10:FF:000004">
    <property type="entry name" value="S-adenosylmethionine synthase"/>
    <property type="match status" value="1"/>
</dbReference>
<dbReference type="Gene3D" id="3.30.300.10">
    <property type="match status" value="3"/>
</dbReference>
<dbReference type="HAMAP" id="MF_00086">
    <property type="entry name" value="S_AdoMet_synth1"/>
    <property type="match status" value="1"/>
</dbReference>
<dbReference type="InterPro" id="IPR022631">
    <property type="entry name" value="ADOMET_SYNTHASE_CS"/>
</dbReference>
<dbReference type="InterPro" id="IPR022630">
    <property type="entry name" value="S-AdoMet_synt_C"/>
</dbReference>
<dbReference type="InterPro" id="IPR022629">
    <property type="entry name" value="S-AdoMet_synt_central"/>
</dbReference>
<dbReference type="InterPro" id="IPR022628">
    <property type="entry name" value="S-AdoMet_synt_N"/>
</dbReference>
<dbReference type="InterPro" id="IPR002133">
    <property type="entry name" value="S-AdoMet_synthetase"/>
</dbReference>
<dbReference type="InterPro" id="IPR022636">
    <property type="entry name" value="S-AdoMet_synthetase_sfam"/>
</dbReference>
<dbReference type="NCBIfam" id="TIGR01034">
    <property type="entry name" value="metK"/>
    <property type="match status" value="1"/>
</dbReference>
<dbReference type="PANTHER" id="PTHR11964">
    <property type="entry name" value="S-ADENOSYLMETHIONINE SYNTHETASE"/>
    <property type="match status" value="1"/>
</dbReference>
<dbReference type="Pfam" id="PF02773">
    <property type="entry name" value="S-AdoMet_synt_C"/>
    <property type="match status" value="1"/>
</dbReference>
<dbReference type="Pfam" id="PF02772">
    <property type="entry name" value="S-AdoMet_synt_M"/>
    <property type="match status" value="1"/>
</dbReference>
<dbReference type="Pfam" id="PF00438">
    <property type="entry name" value="S-AdoMet_synt_N"/>
    <property type="match status" value="1"/>
</dbReference>
<dbReference type="PIRSF" id="PIRSF000497">
    <property type="entry name" value="MAT"/>
    <property type="match status" value="1"/>
</dbReference>
<dbReference type="SUPFAM" id="SSF55973">
    <property type="entry name" value="S-adenosylmethionine synthetase"/>
    <property type="match status" value="3"/>
</dbReference>
<dbReference type="PROSITE" id="PS00376">
    <property type="entry name" value="ADOMET_SYNTHASE_1"/>
    <property type="match status" value="1"/>
</dbReference>
<dbReference type="PROSITE" id="PS00377">
    <property type="entry name" value="ADOMET_SYNTHASE_2"/>
    <property type="match status" value="1"/>
</dbReference>
<gene>
    <name evidence="1" type="primary">metK</name>
    <name type="ordered locus">CJA_0207</name>
</gene>
<protein>
    <recommendedName>
        <fullName evidence="1">S-adenosylmethionine synthase</fullName>
        <shortName evidence="1">AdoMet synthase</shortName>
        <ecNumber evidence="1">2.5.1.6</ecNumber>
    </recommendedName>
    <alternativeName>
        <fullName evidence="1">MAT</fullName>
    </alternativeName>
    <alternativeName>
        <fullName evidence="1">Methionine adenosyltransferase</fullName>
    </alternativeName>
</protein>
<comment type="function">
    <text evidence="1">Catalyzes the formation of S-adenosylmethionine (AdoMet) from methionine and ATP. The overall synthetic reaction is composed of two sequential steps, AdoMet formation and the subsequent tripolyphosphate hydrolysis which occurs prior to release of AdoMet from the enzyme.</text>
</comment>
<comment type="catalytic activity">
    <reaction evidence="1">
        <text>L-methionine + ATP + H2O = S-adenosyl-L-methionine + phosphate + diphosphate</text>
        <dbReference type="Rhea" id="RHEA:21080"/>
        <dbReference type="ChEBI" id="CHEBI:15377"/>
        <dbReference type="ChEBI" id="CHEBI:30616"/>
        <dbReference type="ChEBI" id="CHEBI:33019"/>
        <dbReference type="ChEBI" id="CHEBI:43474"/>
        <dbReference type="ChEBI" id="CHEBI:57844"/>
        <dbReference type="ChEBI" id="CHEBI:59789"/>
        <dbReference type="EC" id="2.5.1.6"/>
    </reaction>
</comment>
<comment type="cofactor">
    <cofactor evidence="1">
        <name>Mg(2+)</name>
        <dbReference type="ChEBI" id="CHEBI:18420"/>
    </cofactor>
    <text evidence="1">Binds 2 divalent ions per subunit.</text>
</comment>
<comment type="cofactor">
    <cofactor evidence="1">
        <name>K(+)</name>
        <dbReference type="ChEBI" id="CHEBI:29103"/>
    </cofactor>
    <text evidence="1">Binds 1 potassium ion per subunit.</text>
</comment>
<comment type="pathway">
    <text evidence="1">Amino-acid biosynthesis; S-adenosyl-L-methionine biosynthesis; S-adenosyl-L-methionine from L-methionine: step 1/1.</text>
</comment>
<comment type="subunit">
    <text evidence="1">Homotetramer; dimer of dimers.</text>
</comment>
<comment type="subcellular location">
    <subcellularLocation>
        <location evidence="1">Cytoplasm</location>
    </subcellularLocation>
</comment>
<comment type="similarity">
    <text evidence="1">Belongs to the AdoMet synthase family.</text>
</comment>
<feature type="chain" id="PRO_1000093033" description="S-adenosylmethionine synthase">
    <location>
        <begin position="1"/>
        <end position="384"/>
    </location>
</feature>
<feature type="region of interest" description="Flexible loop" evidence="1">
    <location>
        <begin position="100"/>
        <end position="110"/>
    </location>
</feature>
<feature type="binding site" description="in other chain" evidence="1">
    <location>
        <position position="16"/>
    </location>
    <ligand>
        <name>ATP</name>
        <dbReference type="ChEBI" id="CHEBI:30616"/>
        <note>ligand shared between two neighboring subunits</note>
    </ligand>
</feature>
<feature type="binding site" evidence="1">
    <location>
        <position position="18"/>
    </location>
    <ligand>
        <name>Mg(2+)</name>
        <dbReference type="ChEBI" id="CHEBI:18420"/>
    </ligand>
</feature>
<feature type="binding site" evidence="1">
    <location>
        <position position="44"/>
    </location>
    <ligand>
        <name>K(+)</name>
        <dbReference type="ChEBI" id="CHEBI:29103"/>
    </ligand>
</feature>
<feature type="binding site" description="in other chain" evidence="1">
    <location>
        <position position="57"/>
    </location>
    <ligand>
        <name>L-methionine</name>
        <dbReference type="ChEBI" id="CHEBI:57844"/>
        <note>ligand shared between two neighboring subunits</note>
    </ligand>
</feature>
<feature type="binding site" description="in other chain" evidence="1">
    <location>
        <position position="100"/>
    </location>
    <ligand>
        <name>L-methionine</name>
        <dbReference type="ChEBI" id="CHEBI:57844"/>
        <note>ligand shared between two neighboring subunits</note>
    </ligand>
</feature>
<feature type="binding site" description="in other chain" evidence="1">
    <location>
        <begin position="165"/>
        <end position="167"/>
    </location>
    <ligand>
        <name>ATP</name>
        <dbReference type="ChEBI" id="CHEBI:30616"/>
        <note>ligand shared between two neighboring subunits</note>
    </ligand>
</feature>
<feature type="binding site" evidence="1">
    <location>
        <position position="240"/>
    </location>
    <ligand>
        <name>ATP</name>
        <dbReference type="ChEBI" id="CHEBI:30616"/>
        <note>ligand shared between two neighboring subunits</note>
    </ligand>
</feature>
<feature type="binding site" evidence="1">
    <location>
        <position position="240"/>
    </location>
    <ligand>
        <name>L-methionine</name>
        <dbReference type="ChEBI" id="CHEBI:57844"/>
        <note>ligand shared between two neighboring subunits</note>
    </ligand>
</feature>
<feature type="binding site" description="in other chain" evidence="1">
    <location>
        <begin position="246"/>
        <end position="247"/>
    </location>
    <ligand>
        <name>ATP</name>
        <dbReference type="ChEBI" id="CHEBI:30616"/>
        <note>ligand shared between two neighboring subunits</note>
    </ligand>
</feature>
<feature type="binding site" evidence="1">
    <location>
        <position position="263"/>
    </location>
    <ligand>
        <name>ATP</name>
        <dbReference type="ChEBI" id="CHEBI:30616"/>
        <note>ligand shared between two neighboring subunits</note>
    </ligand>
</feature>
<feature type="binding site" evidence="1">
    <location>
        <position position="267"/>
    </location>
    <ligand>
        <name>ATP</name>
        <dbReference type="ChEBI" id="CHEBI:30616"/>
        <note>ligand shared between two neighboring subunits</note>
    </ligand>
</feature>
<feature type="binding site" description="in other chain" evidence="1">
    <location>
        <position position="271"/>
    </location>
    <ligand>
        <name>L-methionine</name>
        <dbReference type="ChEBI" id="CHEBI:57844"/>
        <note>ligand shared between two neighboring subunits</note>
    </ligand>
</feature>
<proteinExistence type="inferred from homology"/>
<accession>B3PGF2</accession>
<evidence type="ECO:0000255" key="1">
    <source>
        <dbReference type="HAMAP-Rule" id="MF_00086"/>
    </source>
</evidence>
<sequence>MSEYSVFTSESVSEGHPDKMADQISDAVLDAILTDDPNARVAVETLVKTGMAIVAGEVRTSTYVDLEDLIRQVILDIGYNSSDVGFDGASCAVLNAIGKQSADIAMGVDEGDQKDLGAGDQGLMFGYATNETAVLMPAPIFYAHRLVEKQAQLRKSGELPWLRPDAKSQVTLRYENGKPVAVDAVVLSTQHSPSVQQAEIHEAVRELIIKNVLPAEWLHKDTQYHINPTGQFIIGGPVGDCGLTGRKIIVDSYGGMARHGGGAFSGKDPSKVDRSAAYAGRYVAKNIVAAGLADKCEIQVSYAIGVAEPTSISINTFGTGKLPDAEIIKLVREHFDLRPRGLIEMLNLKRPIYRQTAAYGHFGRELPDFTWEKTDKADALKKAL</sequence>
<keyword id="KW-0067">ATP-binding</keyword>
<keyword id="KW-0963">Cytoplasm</keyword>
<keyword id="KW-0460">Magnesium</keyword>
<keyword id="KW-0479">Metal-binding</keyword>
<keyword id="KW-0547">Nucleotide-binding</keyword>
<keyword id="KW-0554">One-carbon metabolism</keyword>
<keyword id="KW-0630">Potassium</keyword>
<keyword id="KW-1185">Reference proteome</keyword>
<keyword id="KW-0808">Transferase</keyword>
<reference key="1">
    <citation type="journal article" date="2008" name="J. Bacteriol.">
        <title>Insights into plant cell wall degradation from the genome sequence of the soil bacterium Cellvibrio japonicus.</title>
        <authorList>
            <person name="DeBoy R.T."/>
            <person name="Mongodin E.F."/>
            <person name="Fouts D.E."/>
            <person name="Tailford L.E."/>
            <person name="Khouri H."/>
            <person name="Emerson J.B."/>
            <person name="Mohamoud Y."/>
            <person name="Watkins K."/>
            <person name="Henrissat B."/>
            <person name="Gilbert H.J."/>
            <person name="Nelson K.E."/>
        </authorList>
    </citation>
    <scope>NUCLEOTIDE SEQUENCE [LARGE SCALE GENOMIC DNA]</scope>
    <source>
        <strain>Ueda107</strain>
    </source>
</reference>
<name>METK_CELJU</name>